<reference key="1">
    <citation type="submission" date="2007-11" db="EMBL/GenBank/DDBJ databases">
        <title>Genome sequencing of phylogenetically and phenotypically diverse Coxiella burnetii isolates.</title>
        <authorList>
            <person name="Seshadri R."/>
            <person name="Samuel J.E."/>
        </authorList>
    </citation>
    <scope>NUCLEOTIDE SEQUENCE [LARGE SCALE GENOMIC DNA]</scope>
    <source>
        <strain>RSA 331 / Henzerling II</strain>
    </source>
</reference>
<feature type="chain" id="PRO_1000084579" description="tRNA pseudouridine synthase B">
    <location>
        <begin position="1"/>
        <end position="309"/>
    </location>
</feature>
<feature type="active site" description="Nucleophile" evidence="1">
    <location>
        <position position="51"/>
    </location>
</feature>
<keyword id="KW-0413">Isomerase</keyword>
<keyword id="KW-0819">tRNA processing</keyword>
<accession>A9N8V4</accession>
<sequence length="309" mass="34636">MTATNHPKLFKRPVDGVLLLDKPGGMTSNEALQRVKRLFHAKKAGHTGSLDPLATGLLPICLGEATKFSQFLLEADKSYSVKGRLGVRTASGDSESPILTECPIPKLTKRALEKTLFAFRGVIDQTPSMYSALKHKGQPLYKLARQGIEVERKTRQVTIYELTLLDWDNESIELYVHCSKGTYIRTLLDDVGEALGCGAHVVALRRLRVAHYHEDQMIKLAHLEREYDKANYTGLDRYLLPLETMVSHFPAIKLSSSTAFYLQQGQAVMVPNAPTHGFVRLRDQNDQFIGIGEILSDARIAPRRLIQKR</sequence>
<name>TRUB_COXBR</name>
<gene>
    <name evidence="1" type="primary">truB</name>
    <name type="ordered locus">COXBURSA331_A1598</name>
</gene>
<organism>
    <name type="scientific">Coxiella burnetii (strain RSA 331 / Henzerling II)</name>
    <dbReference type="NCBI Taxonomy" id="360115"/>
    <lineage>
        <taxon>Bacteria</taxon>
        <taxon>Pseudomonadati</taxon>
        <taxon>Pseudomonadota</taxon>
        <taxon>Gammaproteobacteria</taxon>
        <taxon>Legionellales</taxon>
        <taxon>Coxiellaceae</taxon>
        <taxon>Coxiella</taxon>
    </lineage>
</organism>
<evidence type="ECO:0000255" key="1">
    <source>
        <dbReference type="HAMAP-Rule" id="MF_01080"/>
    </source>
</evidence>
<comment type="function">
    <text evidence="1">Responsible for synthesis of pseudouridine from uracil-55 in the psi GC loop of transfer RNAs.</text>
</comment>
<comment type="catalytic activity">
    <reaction evidence="1">
        <text>uridine(55) in tRNA = pseudouridine(55) in tRNA</text>
        <dbReference type="Rhea" id="RHEA:42532"/>
        <dbReference type="Rhea" id="RHEA-COMP:10101"/>
        <dbReference type="Rhea" id="RHEA-COMP:10102"/>
        <dbReference type="ChEBI" id="CHEBI:65314"/>
        <dbReference type="ChEBI" id="CHEBI:65315"/>
        <dbReference type="EC" id="5.4.99.25"/>
    </reaction>
</comment>
<comment type="similarity">
    <text evidence="1">Belongs to the pseudouridine synthase TruB family. Type 1 subfamily.</text>
</comment>
<dbReference type="EC" id="5.4.99.25" evidence="1"/>
<dbReference type="EMBL" id="CP000890">
    <property type="protein sequence ID" value="ABX78324.1"/>
    <property type="molecule type" value="Genomic_DNA"/>
</dbReference>
<dbReference type="RefSeq" id="WP_012220656.1">
    <property type="nucleotide sequence ID" value="NC_010117.1"/>
</dbReference>
<dbReference type="SMR" id="A9N8V4"/>
<dbReference type="KEGG" id="cbs:COXBURSA331_A1598"/>
<dbReference type="HOGENOM" id="CLU_032087_0_3_6"/>
<dbReference type="GO" id="GO:0003723">
    <property type="term" value="F:RNA binding"/>
    <property type="evidence" value="ECO:0007669"/>
    <property type="project" value="InterPro"/>
</dbReference>
<dbReference type="GO" id="GO:0160148">
    <property type="term" value="F:tRNA pseudouridine(55) synthase activity"/>
    <property type="evidence" value="ECO:0007669"/>
    <property type="project" value="UniProtKB-EC"/>
</dbReference>
<dbReference type="GO" id="GO:1990481">
    <property type="term" value="P:mRNA pseudouridine synthesis"/>
    <property type="evidence" value="ECO:0007669"/>
    <property type="project" value="TreeGrafter"/>
</dbReference>
<dbReference type="GO" id="GO:0031119">
    <property type="term" value="P:tRNA pseudouridine synthesis"/>
    <property type="evidence" value="ECO:0007669"/>
    <property type="project" value="UniProtKB-UniRule"/>
</dbReference>
<dbReference type="CDD" id="cd02573">
    <property type="entry name" value="PseudoU_synth_EcTruB"/>
    <property type="match status" value="1"/>
</dbReference>
<dbReference type="CDD" id="cd21152">
    <property type="entry name" value="PUA_TruB_bacterial"/>
    <property type="match status" value="1"/>
</dbReference>
<dbReference type="FunFam" id="2.30.130.10:FF:000012">
    <property type="entry name" value="tRNA pseudouridine synthase B"/>
    <property type="match status" value="1"/>
</dbReference>
<dbReference type="FunFam" id="3.30.2350.10:FF:000003">
    <property type="entry name" value="tRNA pseudouridine synthase B"/>
    <property type="match status" value="1"/>
</dbReference>
<dbReference type="Gene3D" id="3.30.2350.10">
    <property type="entry name" value="Pseudouridine synthase"/>
    <property type="match status" value="1"/>
</dbReference>
<dbReference type="Gene3D" id="2.30.130.10">
    <property type="entry name" value="PUA domain"/>
    <property type="match status" value="1"/>
</dbReference>
<dbReference type="HAMAP" id="MF_01080">
    <property type="entry name" value="TruB_bact"/>
    <property type="match status" value="1"/>
</dbReference>
<dbReference type="InterPro" id="IPR020103">
    <property type="entry name" value="PsdUridine_synth_cat_dom_sf"/>
</dbReference>
<dbReference type="InterPro" id="IPR002501">
    <property type="entry name" value="PsdUridine_synth_N"/>
</dbReference>
<dbReference type="InterPro" id="IPR015947">
    <property type="entry name" value="PUA-like_sf"/>
</dbReference>
<dbReference type="InterPro" id="IPR036974">
    <property type="entry name" value="PUA_sf"/>
</dbReference>
<dbReference type="InterPro" id="IPR014780">
    <property type="entry name" value="tRNA_psdUridine_synth_TruB"/>
</dbReference>
<dbReference type="InterPro" id="IPR015240">
    <property type="entry name" value="tRNA_sdUridine_synth_fam1_C"/>
</dbReference>
<dbReference type="InterPro" id="IPR032819">
    <property type="entry name" value="TruB_C"/>
</dbReference>
<dbReference type="NCBIfam" id="TIGR00431">
    <property type="entry name" value="TruB"/>
    <property type="match status" value="1"/>
</dbReference>
<dbReference type="PANTHER" id="PTHR13767:SF2">
    <property type="entry name" value="PSEUDOURIDYLATE SYNTHASE TRUB1"/>
    <property type="match status" value="1"/>
</dbReference>
<dbReference type="PANTHER" id="PTHR13767">
    <property type="entry name" value="TRNA-PSEUDOURIDINE SYNTHASE"/>
    <property type="match status" value="1"/>
</dbReference>
<dbReference type="Pfam" id="PF09157">
    <property type="entry name" value="TruB-C_2"/>
    <property type="match status" value="1"/>
</dbReference>
<dbReference type="Pfam" id="PF16198">
    <property type="entry name" value="TruB_C_2"/>
    <property type="match status" value="1"/>
</dbReference>
<dbReference type="Pfam" id="PF01509">
    <property type="entry name" value="TruB_N"/>
    <property type="match status" value="1"/>
</dbReference>
<dbReference type="SUPFAM" id="SSF55120">
    <property type="entry name" value="Pseudouridine synthase"/>
    <property type="match status" value="1"/>
</dbReference>
<dbReference type="SUPFAM" id="SSF88697">
    <property type="entry name" value="PUA domain-like"/>
    <property type="match status" value="1"/>
</dbReference>
<protein>
    <recommendedName>
        <fullName evidence="1">tRNA pseudouridine synthase B</fullName>
        <ecNumber evidence="1">5.4.99.25</ecNumber>
    </recommendedName>
    <alternativeName>
        <fullName evidence="1">tRNA pseudouridine(55) synthase</fullName>
        <shortName evidence="1">Psi55 synthase</shortName>
    </alternativeName>
    <alternativeName>
        <fullName evidence="1">tRNA pseudouridylate synthase</fullName>
    </alternativeName>
    <alternativeName>
        <fullName evidence="1">tRNA-uridine isomerase</fullName>
    </alternativeName>
</protein>
<proteinExistence type="inferred from homology"/>